<name>RS14_STRPI</name>
<dbReference type="EMBL" id="CP000936">
    <property type="protein sequence ID" value="ACA37306.1"/>
    <property type="molecule type" value="Genomic_DNA"/>
</dbReference>
<dbReference type="RefSeq" id="WP_001085703.1">
    <property type="nucleotide sequence ID" value="NC_010380.1"/>
</dbReference>
<dbReference type="SMR" id="B1I8L1"/>
<dbReference type="GeneID" id="45652296"/>
<dbReference type="KEGG" id="spv:SPH_0336"/>
<dbReference type="HOGENOM" id="CLU_139869_0_0_9"/>
<dbReference type="Proteomes" id="UP000002163">
    <property type="component" value="Chromosome"/>
</dbReference>
<dbReference type="GO" id="GO:0005737">
    <property type="term" value="C:cytoplasm"/>
    <property type="evidence" value="ECO:0007669"/>
    <property type="project" value="UniProtKB-ARBA"/>
</dbReference>
<dbReference type="GO" id="GO:0015935">
    <property type="term" value="C:small ribosomal subunit"/>
    <property type="evidence" value="ECO:0007669"/>
    <property type="project" value="TreeGrafter"/>
</dbReference>
<dbReference type="GO" id="GO:0019843">
    <property type="term" value="F:rRNA binding"/>
    <property type="evidence" value="ECO:0007669"/>
    <property type="project" value="UniProtKB-UniRule"/>
</dbReference>
<dbReference type="GO" id="GO:0003735">
    <property type="term" value="F:structural constituent of ribosome"/>
    <property type="evidence" value="ECO:0007669"/>
    <property type="project" value="InterPro"/>
</dbReference>
<dbReference type="GO" id="GO:0006412">
    <property type="term" value="P:translation"/>
    <property type="evidence" value="ECO:0007669"/>
    <property type="project" value="UniProtKB-UniRule"/>
</dbReference>
<dbReference type="FunFam" id="4.10.830.10:FF:000003">
    <property type="entry name" value="30S ribosomal protein S14"/>
    <property type="match status" value="1"/>
</dbReference>
<dbReference type="Gene3D" id="4.10.830.10">
    <property type="entry name" value="30s Ribosomal Protein S14, Chain N"/>
    <property type="match status" value="1"/>
</dbReference>
<dbReference type="HAMAP" id="MF_00537">
    <property type="entry name" value="Ribosomal_uS14_1"/>
    <property type="match status" value="1"/>
</dbReference>
<dbReference type="InterPro" id="IPR001209">
    <property type="entry name" value="Ribosomal_uS14"/>
</dbReference>
<dbReference type="InterPro" id="IPR023036">
    <property type="entry name" value="Ribosomal_uS14_bac/plastid"/>
</dbReference>
<dbReference type="InterPro" id="IPR018271">
    <property type="entry name" value="Ribosomal_uS14_CS"/>
</dbReference>
<dbReference type="InterPro" id="IPR043140">
    <property type="entry name" value="Ribosomal_uS14_sf"/>
</dbReference>
<dbReference type="NCBIfam" id="NF006477">
    <property type="entry name" value="PRK08881.1"/>
    <property type="match status" value="1"/>
</dbReference>
<dbReference type="PANTHER" id="PTHR19836">
    <property type="entry name" value="30S RIBOSOMAL PROTEIN S14"/>
    <property type="match status" value="1"/>
</dbReference>
<dbReference type="PANTHER" id="PTHR19836:SF19">
    <property type="entry name" value="SMALL RIBOSOMAL SUBUNIT PROTEIN US14M"/>
    <property type="match status" value="1"/>
</dbReference>
<dbReference type="Pfam" id="PF00253">
    <property type="entry name" value="Ribosomal_S14"/>
    <property type="match status" value="1"/>
</dbReference>
<dbReference type="SUPFAM" id="SSF57716">
    <property type="entry name" value="Glucocorticoid receptor-like (DNA-binding domain)"/>
    <property type="match status" value="1"/>
</dbReference>
<dbReference type="PROSITE" id="PS00527">
    <property type="entry name" value="RIBOSOMAL_S14"/>
    <property type="match status" value="1"/>
</dbReference>
<gene>
    <name evidence="1" type="primary">rpsN</name>
    <name type="ordered locus">SPH_0336</name>
</gene>
<accession>B1I8L1</accession>
<evidence type="ECO:0000255" key="1">
    <source>
        <dbReference type="HAMAP-Rule" id="MF_00537"/>
    </source>
</evidence>
<evidence type="ECO:0000305" key="2"/>
<comment type="function">
    <text evidence="1">Binds 16S rRNA, required for the assembly of 30S particles and may also be responsible for determining the conformation of the 16S rRNA at the A site.</text>
</comment>
<comment type="subunit">
    <text evidence="1">Part of the 30S ribosomal subunit. Contacts proteins S3 and S10.</text>
</comment>
<comment type="similarity">
    <text evidence="1">Belongs to the universal ribosomal protein uS14 family.</text>
</comment>
<proteinExistence type="inferred from homology"/>
<keyword id="KW-0687">Ribonucleoprotein</keyword>
<keyword id="KW-0689">Ribosomal protein</keyword>
<keyword id="KW-0694">RNA-binding</keyword>
<keyword id="KW-0699">rRNA-binding</keyword>
<organism>
    <name type="scientific">Streptococcus pneumoniae (strain Hungary19A-6)</name>
    <dbReference type="NCBI Taxonomy" id="487214"/>
    <lineage>
        <taxon>Bacteria</taxon>
        <taxon>Bacillati</taxon>
        <taxon>Bacillota</taxon>
        <taxon>Bacilli</taxon>
        <taxon>Lactobacillales</taxon>
        <taxon>Streptococcaceae</taxon>
        <taxon>Streptococcus</taxon>
    </lineage>
</organism>
<reference key="1">
    <citation type="journal article" date="2010" name="Genome Biol.">
        <title>Structure and dynamics of the pan-genome of Streptococcus pneumoniae and closely related species.</title>
        <authorList>
            <person name="Donati C."/>
            <person name="Hiller N.L."/>
            <person name="Tettelin H."/>
            <person name="Muzzi A."/>
            <person name="Croucher N.J."/>
            <person name="Angiuoli S.V."/>
            <person name="Oggioni M."/>
            <person name="Dunning Hotopp J.C."/>
            <person name="Hu F.Z."/>
            <person name="Riley D.R."/>
            <person name="Covacci A."/>
            <person name="Mitchell T.J."/>
            <person name="Bentley S.D."/>
            <person name="Kilian M."/>
            <person name="Ehrlich G.D."/>
            <person name="Rappuoli R."/>
            <person name="Moxon E.R."/>
            <person name="Masignani V."/>
        </authorList>
    </citation>
    <scope>NUCLEOTIDE SEQUENCE [LARGE SCALE GENOMIC DNA]</scope>
    <source>
        <strain>Hungary19A-6</strain>
    </source>
</reference>
<feature type="chain" id="PRO_1000128609" description="Small ribosomal subunit protein uS14">
    <location>
        <begin position="1"/>
        <end position="89"/>
    </location>
</feature>
<sequence length="89" mass="10076">MAKKSMVAREAKRQKIVDRYAEKRAALKAAGDYEGLSKLPRNASPTRLHNRCRVTGRPHSVYRKFGLSRIAFRELAHKGQIPGVTKASW</sequence>
<protein>
    <recommendedName>
        <fullName evidence="1">Small ribosomal subunit protein uS14</fullName>
    </recommendedName>
    <alternativeName>
        <fullName evidence="2">30S ribosomal protein S14</fullName>
    </alternativeName>
</protein>